<feature type="chain" id="PRO_0000439397" description="Transcription factor IBH1-like 1">
    <location>
        <begin position="1"/>
        <end position="180"/>
    </location>
</feature>
<feature type="domain" description="bHLH" evidence="4">
    <location>
        <begin position="110"/>
        <end position="160"/>
    </location>
</feature>
<name>IBL1_ARATH</name>
<accession>Q9M0B9</accession>
<protein>
    <recommendedName>
        <fullName evidence="3">Transcription factor IBH1-like 1</fullName>
        <shortName evidence="3">AtIBL1</shortName>
    </recommendedName>
    <alternativeName>
        <fullName>BHLH transcription factor eta</fullName>
        <shortName evidence="7">bHLH eta</shortName>
    </alternativeName>
    <alternativeName>
        <fullName>Basic helix-loop-helix protein 159</fullName>
        <shortName evidence="2">AtbHLH159</shortName>
        <shortName>bHLH 159</shortName>
    </alternativeName>
    <alternativeName>
        <fullName>bHLH transcription factor bHLH159</fullName>
    </alternativeName>
</protein>
<organism>
    <name type="scientific">Arabidopsis thaliana</name>
    <name type="common">Mouse-ear cress</name>
    <dbReference type="NCBI Taxonomy" id="3702"/>
    <lineage>
        <taxon>Eukaryota</taxon>
        <taxon>Viridiplantae</taxon>
        <taxon>Streptophyta</taxon>
        <taxon>Embryophyta</taxon>
        <taxon>Tracheophyta</taxon>
        <taxon>Spermatophyta</taxon>
        <taxon>Magnoliopsida</taxon>
        <taxon>eudicotyledons</taxon>
        <taxon>Gunneridae</taxon>
        <taxon>Pentapetalae</taxon>
        <taxon>rosids</taxon>
        <taxon>malvids</taxon>
        <taxon>Brassicales</taxon>
        <taxon>Brassicaceae</taxon>
        <taxon>Camelineae</taxon>
        <taxon>Arabidopsis</taxon>
    </lineage>
</organism>
<sequence length="180" mass="20435">MQPTSSMNEEFLKKWQMGLQIFRPSIDNTSVHERKKAIKLSADVAMASLRKGTTCWSRALIEKTATEDNFLVRQMLSGIKAETLINKKLPKKTVCHRKIVRRSKKILRRKSKSASEEAAAKAKRLVKRRTQGLRNVVPGGELMSNDVLLLQETLDYIVSLQTQVNVMRSIVDAAEAEIER</sequence>
<evidence type="ECO:0000269" key="1">
    <source>
    </source>
</evidence>
<evidence type="ECO:0000303" key="2">
    <source>
    </source>
</evidence>
<evidence type="ECO:0000303" key="3">
    <source>
    </source>
</evidence>
<evidence type="ECO:0000305" key="4"/>
<evidence type="ECO:0000312" key="5">
    <source>
        <dbReference type="Araport" id="AT4G30410"/>
    </source>
</evidence>
<evidence type="ECO:0000312" key="6">
    <source>
        <dbReference type="EMBL" id="AF160182"/>
    </source>
</evidence>
<evidence type="ECO:0000312" key="7">
    <source>
        <dbReference type="EMBL" id="CAE09173.1"/>
    </source>
</evidence>
<keyword id="KW-1070">Brassinosteroid signaling pathway</keyword>
<keyword id="KW-0238">DNA-binding</keyword>
<keyword id="KW-0939">Gibberellin signaling pathway</keyword>
<keyword id="KW-0341">Growth regulation</keyword>
<keyword id="KW-0539">Nucleus</keyword>
<keyword id="KW-1185">Reference proteome</keyword>
<keyword id="KW-0804">Transcription</keyword>
<keyword id="KW-0805">Transcription regulation</keyword>
<proteinExistence type="evidence at protein level"/>
<gene>
    <name evidence="3" type="primary">IBL1</name>
    <name evidence="2" type="synonym">BHLH159</name>
    <name evidence="5" type="ordered locus">At4g30410</name>
    <name evidence="6" type="ORF">F17I23.250</name>
</gene>
<comment type="function">
    <text evidence="1">Functions redundandly with IBH1/BHLH158 in a regulation node known as the incoherent feed-forward loop (FFL). Acts as transcriptional repressor that negatively regulates cell and organ elongation in response to gibberellin (GA) and brassinosteroid (BR) signaling.</text>
</comment>
<comment type="interaction">
    <interactant intactId="EBI-15192969">
        <id>Q9M0B9</id>
    </interactant>
    <interactant intactId="EBI-4424312">
        <id>Q93VJ4</id>
        <label>BEE2</label>
    </interactant>
    <organismsDiffer>false</organismsDiffer>
    <experiments>3</experiments>
</comment>
<comment type="interaction">
    <interactant intactId="EBI-15192969">
        <id>Q9M0B9</id>
    </interactant>
    <interactant intactId="EBI-15194889">
        <id>Q3EAI1-2</id>
        <label>BHLH60</label>
    </interactant>
    <organismsDiffer>false</organismsDiffer>
    <experiments>3</experiments>
</comment>
<comment type="interaction">
    <interactant intactId="EBI-15192969">
        <id>Q9M0B9</id>
    </interactant>
    <interactant intactId="EBI-15192967">
        <id>Q9LK48</id>
        <label>BHLH77</label>
    </interactant>
    <organismsDiffer>false</organismsDiffer>
    <experiments>3</experiments>
</comment>
<comment type="interaction">
    <interactant intactId="EBI-15192969">
        <id>Q9M0B9</id>
    </interactant>
    <interactant intactId="EBI-15197377">
        <id>Q9ZPW3-2</id>
        <label>HBI1</label>
    </interactant>
    <organismsDiffer>false</organismsDiffer>
    <experiments>3</experiments>
</comment>
<comment type="interaction">
    <interactant intactId="EBI-15192969">
        <id>Q9M0B9</id>
    </interactant>
    <interactant intactId="EBI-15195291">
        <id>Q9LJX1</id>
        <label>PRE5</label>
    </interactant>
    <organismsDiffer>false</organismsDiffer>
    <experiments>5</experiments>
</comment>
<comment type="subcellular location">
    <subcellularLocation>
        <location evidence="4">Nucleus</location>
    </subcellularLocation>
</comment>
<comment type="disruption phenotype">
    <text evidence="1">No visible phenotype.</text>
</comment>
<comment type="miscellaneous">
    <text evidence="1">Plants over-expressing IBL1 are dwarf with round-shaped, dark-green leaves and short petioles.</text>
</comment>
<comment type="similarity">
    <text evidence="4">Belongs to the bHLH protein family.</text>
</comment>
<dbReference type="EMBL" id="AJ576046">
    <property type="protein sequence ID" value="CAE09173.1"/>
    <property type="molecule type" value="mRNA"/>
</dbReference>
<dbReference type="EMBL" id="AF160182">
    <property type="status" value="NOT_ANNOTATED_CDS"/>
    <property type="molecule type" value="Genomic_DNA"/>
</dbReference>
<dbReference type="EMBL" id="AL161577">
    <property type="protein sequence ID" value="CAB79759.1"/>
    <property type="molecule type" value="Genomic_DNA"/>
</dbReference>
<dbReference type="EMBL" id="CP002687">
    <property type="protein sequence ID" value="AEE85761.1"/>
    <property type="molecule type" value="Genomic_DNA"/>
</dbReference>
<dbReference type="EMBL" id="CP002687">
    <property type="protein sequence ID" value="AEE85762.1"/>
    <property type="molecule type" value="Genomic_DNA"/>
</dbReference>
<dbReference type="EMBL" id="BT006398">
    <property type="protein sequence ID" value="AAP21206.1"/>
    <property type="molecule type" value="mRNA"/>
</dbReference>
<dbReference type="EMBL" id="AK227688">
    <property type="protein sequence ID" value="BAE99675.1"/>
    <property type="molecule type" value="mRNA"/>
</dbReference>
<dbReference type="PIR" id="F85355">
    <property type="entry name" value="F85355"/>
</dbReference>
<dbReference type="RefSeq" id="NP_194770.1">
    <property type="nucleotide sequence ID" value="NM_119187.4"/>
</dbReference>
<dbReference type="RefSeq" id="NP_974640.1">
    <property type="nucleotide sequence ID" value="NM_202911.2"/>
</dbReference>
<dbReference type="SMR" id="Q9M0B9"/>
<dbReference type="FunCoup" id="Q9M0B9">
    <property type="interactions" value="207"/>
</dbReference>
<dbReference type="IntAct" id="Q9M0B9">
    <property type="interactions" value="15"/>
</dbReference>
<dbReference type="STRING" id="3702.Q9M0B9"/>
<dbReference type="iPTMnet" id="Q9M0B9"/>
<dbReference type="PaxDb" id="3702-AT4G30410.2"/>
<dbReference type="ProteomicsDB" id="232197"/>
<dbReference type="EnsemblPlants" id="AT4G30410.1">
    <property type="protein sequence ID" value="AT4G30410.1"/>
    <property type="gene ID" value="AT4G30410"/>
</dbReference>
<dbReference type="EnsemblPlants" id="AT4G30410.2">
    <property type="protein sequence ID" value="AT4G30410.2"/>
    <property type="gene ID" value="AT4G30410"/>
</dbReference>
<dbReference type="GeneID" id="829164"/>
<dbReference type="Gramene" id="AT4G30410.1">
    <property type="protein sequence ID" value="AT4G30410.1"/>
    <property type="gene ID" value="AT4G30410"/>
</dbReference>
<dbReference type="Gramene" id="AT4G30410.2">
    <property type="protein sequence ID" value="AT4G30410.2"/>
    <property type="gene ID" value="AT4G30410"/>
</dbReference>
<dbReference type="KEGG" id="ath:AT4G30410"/>
<dbReference type="Araport" id="AT4G30410"/>
<dbReference type="TAIR" id="AT4G30410">
    <property type="gene designation" value="IBL1"/>
</dbReference>
<dbReference type="eggNOG" id="ENOG502RYWW">
    <property type="taxonomic scope" value="Eukaryota"/>
</dbReference>
<dbReference type="HOGENOM" id="CLU_088059_2_0_1"/>
<dbReference type="InParanoid" id="Q9M0B9"/>
<dbReference type="OMA" id="MNISECM"/>
<dbReference type="PRO" id="PR:Q9M0B9"/>
<dbReference type="Proteomes" id="UP000006548">
    <property type="component" value="Chromosome 4"/>
</dbReference>
<dbReference type="ExpressionAtlas" id="Q9M0B9">
    <property type="expression patterns" value="baseline and differential"/>
</dbReference>
<dbReference type="GO" id="GO:0005634">
    <property type="term" value="C:nucleus"/>
    <property type="evidence" value="ECO:0007669"/>
    <property type="project" value="UniProtKB-SubCell"/>
</dbReference>
<dbReference type="GO" id="GO:0003700">
    <property type="term" value="F:DNA-binding transcription factor activity"/>
    <property type="evidence" value="ECO:0000250"/>
    <property type="project" value="TAIR"/>
</dbReference>
<dbReference type="GO" id="GO:0046983">
    <property type="term" value="F:protein dimerization activity"/>
    <property type="evidence" value="ECO:0007669"/>
    <property type="project" value="InterPro"/>
</dbReference>
<dbReference type="GO" id="GO:0000976">
    <property type="term" value="F:transcription cis-regulatory region binding"/>
    <property type="evidence" value="ECO:0000353"/>
    <property type="project" value="TAIR"/>
</dbReference>
<dbReference type="GO" id="GO:0009742">
    <property type="term" value="P:brassinosteroid mediated signaling pathway"/>
    <property type="evidence" value="ECO:0000315"/>
    <property type="project" value="UniProtKB"/>
</dbReference>
<dbReference type="GO" id="GO:0009740">
    <property type="term" value="P:gibberellic acid mediated signaling pathway"/>
    <property type="evidence" value="ECO:0007669"/>
    <property type="project" value="UniProtKB-KW"/>
</dbReference>
<dbReference type="GO" id="GO:0040008">
    <property type="term" value="P:regulation of growth"/>
    <property type="evidence" value="ECO:0000315"/>
    <property type="project" value="UniProtKB"/>
</dbReference>
<dbReference type="CDD" id="cd11444">
    <property type="entry name" value="bHLH_AtIBH1_like"/>
    <property type="match status" value="1"/>
</dbReference>
<dbReference type="InterPro" id="IPR044549">
    <property type="entry name" value="bHLH_AtIBH1-like"/>
</dbReference>
<dbReference type="InterPro" id="IPR036638">
    <property type="entry name" value="HLH_DNA-bd_sf"/>
</dbReference>
<dbReference type="InterPro" id="IPR044660">
    <property type="entry name" value="IBH1-like"/>
</dbReference>
<dbReference type="PANTHER" id="PTHR33124">
    <property type="entry name" value="TRANSCRIPTION FACTOR IBH1-LIKE 1"/>
    <property type="match status" value="1"/>
</dbReference>
<dbReference type="PANTHER" id="PTHR33124:SF5">
    <property type="entry name" value="TRANSCRIPTION FACTOR IBH1-LIKE 1"/>
    <property type="match status" value="1"/>
</dbReference>
<dbReference type="SUPFAM" id="SSF47459">
    <property type="entry name" value="HLH, helix-loop-helix DNA-binding domain"/>
    <property type="match status" value="1"/>
</dbReference>
<reference key="1">
    <citation type="journal article" date="2003" name="Plant Cell">
        <title>Update on the basic helix-loop-helix transcription factor gene family in Arabidopsis thaliana.</title>
        <authorList>
            <person name="Bailey P.C."/>
            <person name="Martin C."/>
            <person name="Toledo-Ortiz G."/>
            <person name="Quail P.H."/>
            <person name="Huq E."/>
            <person name="Heim M.A."/>
            <person name="Jakoby M."/>
            <person name="Werber M."/>
            <person name="Weisshaar B."/>
        </authorList>
    </citation>
    <scope>NUCLEOTIDE SEQUENCE [MRNA]</scope>
    <scope>GENE FAMILY</scope>
    <scope>NOMENCLATURE</scope>
</reference>
<reference key="2">
    <citation type="journal article" date="1999" name="Nature">
        <title>Sequence and analysis of chromosome 4 of the plant Arabidopsis thaliana.</title>
        <authorList>
            <person name="Mayer K.F.X."/>
            <person name="Schueller C."/>
            <person name="Wambutt R."/>
            <person name="Murphy G."/>
            <person name="Volckaert G."/>
            <person name="Pohl T."/>
            <person name="Duesterhoeft A."/>
            <person name="Stiekema W."/>
            <person name="Entian K.-D."/>
            <person name="Terryn N."/>
            <person name="Harris B."/>
            <person name="Ansorge W."/>
            <person name="Brandt P."/>
            <person name="Grivell L.A."/>
            <person name="Rieger M."/>
            <person name="Weichselgartner M."/>
            <person name="de Simone V."/>
            <person name="Obermaier B."/>
            <person name="Mache R."/>
            <person name="Mueller M."/>
            <person name="Kreis M."/>
            <person name="Delseny M."/>
            <person name="Puigdomenech P."/>
            <person name="Watson M."/>
            <person name="Schmidtheini T."/>
            <person name="Reichert B."/>
            <person name="Portetelle D."/>
            <person name="Perez-Alonso M."/>
            <person name="Boutry M."/>
            <person name="Bancroft I."/>
            <person name="Vos P."/>
            <person name="Hoheisel J."/>
            <person name="Zimmermann W."/>
            <person name="Wedler H."/>
            <person name="Ridley P."/>
            <person name="Langham S.-A."/>
            <person name="McCullagh B."/>
            <person name="Bilham L."/>
            <person name="Robben J."/>
            <person name="van der Schueren J."/>
            <person name="Grymonprez B."/>
            <person name="Chuang Y.-J."/>
            <person name="Vandenbussche F."/>
            <person name="Braeken M."/>
            <person name="Weltjens I."/>
            <person name="Voet M."/>
            <person name="Bastiaens I."/>
            <person name="Aert R."/>
            <person name="Defoor E."/>
            <person name="Weitzenegger T."/>
            <person name="Bothe G."/>
            <person name="Ramsperger U."/>
            <person name="Hilbert H."/>
            <person name="Braun M."/>
            <person name="Holzer E."/>
            <person name="Brandt A."/>
            <person name="Peters S."/>
            <person name="van Staveren M."/>
            <person name="Dirkse W."/>
            <person name="Mooijman P."/>
            <person name="Klein Lankhorst R."/>
            <person name="Rose M."/>
            <person name="Hauf J."/>
            <person name="Koetter P."/>
            <person name="Berneiser S."/>
            <person name="Hempel S."/>
            <person name="Feldpausch M."/>
            <person name="Lamberth S."/>
            <person name="Van den Daele H."/>
            <person name="De Keyser A."/>
            <person name="Buysshaert C."/>
            <person name="Gielen J."/>
            <person name="Villarroel R."/>
            <person name="De Clercq R."/>
            <person name="van Montagu M."/>
            <person name="Rogers J."/>
            <person name="Cronin A."/>
            <person name="Quail M.A."/>
            <person name="Bray-Allen S."/>
            <person name="Clark L."/>
            <person name="Doggett J."/>
            <person name="Hall S."/>
            <person name="Kay M."/>
            <person name="Lennard N."/>
            <person name="McLay K."/>
            <person name="Mayes R."/>
            <person name="Pettett A."/>
            <person name="Rajandream M.A."/>
            <person name="Lyne M."/>
            <person name="Benes V."/>
            <person name="Rechmann S."/>
            <person name="Borkova D."/>
            <person name="Bloecker H."/>
            <person name="Scharfe M."/>
            <person name="Grimm M."/>
            <person name="Loehnert T.-H."/>
            <person name="Dose S."/>
            <person name="de Haan M."/>
            <person name="Maarse A.C."/>
            <person name="Schaefer M."/>
            <person name="Mueller-Auer S."/>
            <person name="Gabel C."/>
            <person name="Fuchs M."/>
            <person name="Fartmann B."/>
            <person name="Granderath K."/>
            <person name="Dauner D."/>
            <person name="Herzl A."/>
            <person name="Neumann S."/>
            <person name="Argiriou A."/>
            <person name="Vitale D."/>
            <person name="Liguori R."/>
            <person name="Piravandi E."/>
            <person name="Massenet O."/>
            <person name="Quigley F."/>
            <person name="Clabauld G."/>
            <person name="Muendlein A."/>
            <person name="Felber R."/>
            <person name="Schnabl S."/>
            <person name="Hiller R."/>
            <person name="Schmidt W."/>
            <person name="Lecharny A."/>
            <person name="Aubourg S."/>
            <person name="Chefdor F."/>
            <person name="Cooke R."/>
            <person name="Berger C."/>
            <person name="Monfort A."/>
            <person name="Casacuberta E."/>
            <person name="Gibbons T."/>
            <person name="Weber N."/>
            <person name="Vandenbol M."/>
            <person name="Bargues M."/>
            <person name="Terol J."/>
            <person name="Torres A."/>
            <person name="Perez-Perez A."/>
            <person name="Purnelle B."/>
            <person name="Bent E."/>
            <person name="Johnson S."/>
            <person name="Tacon D."/>
            <person name="Jesse T."/>
            <person name="Heijnen L."/>
            <person name="Schwarz S."/>
            <person name="Scholler P."/>
            <person name="Heber S."/>
            <person name="Francs P."/>
            <person name="Bielke C."/>
            <person name="Frishman D."/>
            <person name="Haase D."/>
            <person name="Lemcke K."/>
            <person name="Mewes H.-W."/>
            <person name="Stocker S."/>
            <person name="Zaccaria P."/>
            <person name="Bevan M."/>
            <person name="Wilson R.K."/>
            <person name="de la Bastide M."/>
            <person name="Habermann K."/>
            <person name="Parnell L."/>
            <person name="Dedhia N."/>
            <person name="Gnoj L."/>
            <person name="Schutz K."/>
            <person name="Huang E."/>
            <person name="Spiegel L."/>
            <person name="Sekhon M."/>
            <person name="Murray J."/>
            <person name="Sheet P."/>
            <person name="Cordes M."/>
            <person name="Abu-Threideh J."/>
            <person name="Stoneking T."/>
            <person name="Kalicki J."/>
            <person name="Graves T."/>
            <person name="Harmon G."/>
            <person name="Edwards J."/>
            <person name="Latreille P."/>
            <person name="Courtney L."/>
            <person name="Cloud J."/>
            <person name="Abbott A."/>
            <person name="Scott K."/>
            <person name="Johnson D."/>
            <person name="Minx P."/>
            <person name="Bentley D."/>
            <person name="Fulton B."/>
            <person name="Miller N."/>
            <person name="Greco T."/>
            <person name="Kemp K."/>
            <person name="Kramer J."/>
            <person name="Fulton L."/>
            <person name="Mardis E."/>
            <person name="Dante M."/>
            <person name="Pepin K."/>
            <person name="Hillier L.W."/>
            <person name="Nelson J."/>
            <person name="Spieth J."/>
            <person name="Ryan E."/>
            <person name="Andrews S."/>
            <person name="Geisel C."/>
            <person name="Layman D."/>
            <person name="Du H."/>
            <person name="Ali J."/>
            <person name="Berghoff A."/>
            <person name="Jones K."/>
            <person name="Drone K."/>
            <person name="Cotton M."/>
            <person name="Joshu C."/>
            <person name="Antonoiu B."/>
            <person name="Zidanic M."/>
            <person name="Strong C."/>
            <person name="Sun H."/>
            <person name="Lamar B."/>
            <person name="Yordan C."/>
            <person name="Ma P."/>
            <person name="Zhong J."/>
            <person name="Preston R."/>
            <person name="Vil D."/>
            <person name="Shekher M."/>
            <person name="Matero A."/>
            <person name="Shah R."/>
            <person name="Swaby I.K."/>
            <person name="O'Shaughnessy A."/>
            <person name="Rodriguez M."/>
            <person name="Hoffman J."/>
            <person name="Till S."/>
            <person name="Granat S."/>
            <person name="Shohdy N."/>
            <person name="Hasegawa A."/>
            <person name="Hameed A."/>
            <person name="Lodhi M."/>
            <person name="Johnson A."/>
            <person name="Chen E."/>
            <person name="Marra M.A."/>
            <person name="Martienssen R."/>
            <person name="McCombie W.R."/>
        </authorList>
    </citation>
    <scope>NUCLEOTIDE SEQUENCE [LARGE SCALE GENOMIC DNA]</scope>
    <source>
        <strain>cv. Columbia</strain>
    </source>
</reference>
<reference key="3">
    <citation type="journal article" date="2017" name="Plant J.">
        <title>Araport11: a complete reannotation of the Arabidopsis thaliana reference genome.</title>
        <authorList>
            <person name="Cheng C.Y."/>
            <person name="Krishnakumar V."/>
            <person name="Chan A.P."/>
            <person name="Thibaud-Nissen F."/>
            <person name="Schobel S."/>
            <person name="Town C.D."/>
        </authorList>
    </citation>
    <scope>GENOME REANNOTATION</scope>
    <source>
        <strain>cv. Columbia</strain>
    </source>
</reference>
<reference key="4">
    <citation type="journal article" date="2003" name="Science">
        <title>Empirical analysis of transcriptional activity in the Arabidopsis genome.</title>
        <authorList>
            <person name="Yamada K."/>
            <person name="Lim J."/>
            <person name="Dale J.M."/>
            <person name="Chen H."/>
            <person name="Shinn P."/>
            <person name="Palm C.J."/>
            <person name="Southwick A.M."/>
            <person name="Wu H.C."/>
            <person name="Kim C.J."/>
            <person name="Nguyen M."/>
            <person name="Pham P.K."/>
            <person name="Cheuk R.F."/>
            <person name="Karlin-Newmann G."/>
            <person name="Liu S.X."/>
            <person name="Lam B."/>
            <person name="Sakano H."/>
            <person name="Wu T."/>
            <person name="Yu G."/>
            <person name="Miranda M."/>
            <person name="Quach H.L."/>
            <person name="Tripp M."/>
            <person name="Chang C.H."/>
            <person name="Lee J.M."/>
            <person name="Toriumi M.J."/>
            <person name="Chan M.M."/>
            <person name="Tang C.C."/>
            <person name="Onodera C.S."/>
            <person name="Deng J.M."/>
            <person name="Akiyama K."/>
            <person name="Ansari Y."/>
            <person name="Arakawa T."/>
            <person name="Banh J."/>
            <person name="Banno F."/>
            <person name="Bowser L."/>
            <person name="Brooks S.Y."/>
            <person name="Carninci P."/>
            <person name="Chao Q."/>
            <person name="Choy N."/>
            <person name="Enju A."/>
            <person name="Goldsmith A.D."/>
            <person name="Gurjal M."/>
            <person name="Hansen N.F."/>
            <person name="Hayashizaki Y."/>
            <person name="Johnson-Hopson C."/>
            <person name="Hsuan V.W."/>
            <person name="Iida K."/>
            <person name="Karnes M."/>
            <person name="Khan S."/>
            <person name="Koesema E."/>
            <person name="Ishida J."/>
            <person name="Jiang P.X."/>
            <person name="Jones T."/>
            <person name="Kawai J."/>
            <person name="Kamiya A."/>
            <person name="Meyers C."/>
            <person name="Nakajima M."/>
            <person name="Narusaka M."/>
            <person name="Seki M."/>
            <person name="Sakurai T."/>
            <person name="Satou M."/>
            <person name="Tamse R."/>
            <person name="Vaysberg M."/>
            <person name="Wallender E.K."/>
            <person name="Wong C."/>
            <person name="Yamamura Y."/>
            <person name="Yuan S."/>
            <person name="Shinozaki K."/>
            <person name="Davis R.W."/>
            <person name="Theologis A."/>
            <person name="Ecker J.R."/>
        </authorList>
    </citation>
    <scope>NUCLEOTIDE SEQUENCE [LARGE SCALE MRNA]</scope>
    <source>
        <strain>cv. Columbia</strain>
    </source>
</reference>
<reference key="5">
    <citation type="submission" date="2006-07" db="EMBL/GenBank/DDBJ databases">
        <title>Large-scale analysis of RIKEN Arabidopsis full-length (RAFL) cDNAs.</title>
        <authorList>
            <person name="Totoki Y."/>
            <person name="Seki M."/>
            <person name="Ishida J."/>
            <person name="Nakajima M."/>
            <person name="Enju A."/>
            <person name="Kamiya A."/>
            <person name="Narusaka M."/>
            <person name="Shin-i T."/>
            <person name="Nakagawa M."/>
            <person name="Sakamoto N."/>
            <person name="Oishi K."/>
            <person name="Kohara Y."/>
            <person name="Kobayashi M."/>
            <person name="Toyoda A."/>
            <person name="Sakaki Y."/>
            <person name="Sakurai T."/>
            <person name="Iida K."/>
            <person name="Akiyama K."/>
            <person name="Satou M."/>
            <person name="Toyoda T."/>
            <person name="Konagaya A."/>
            <person name="Carninci P."/>
            <person name="Kawai J."/>
            <person name="Hayashizaki Y."/>
            <person name="Shinozaki K."/>
        </authorList>
    </citation>
    <scope>NUCLEOTIDE SEQUENCE [LARGE SCALE MRNA]</scope>
    <source>
        <strain>cv. Columbia</strain>
    </source>
</reference>
<reference key="6">
    <citation type="journal article" date="2014" name="Proc. Natl. Acad. Sci. U.S.A.">
        <title>Helix-loop-helix/basic helix-loop-helix transcription factor network represses cell elongation in Arabidopsis through an apparent incoherent feed-forward loop.</title>
        <authorList>
            <person name="Zhiponova M.K."/>
            <person name="Morohashi K."/>
            <person name="Vanhoutte I."/>
            <person name="Machemer-Noonan K."/>
            <person name="Revalska M."/>
            <person name="Van Montagu M."/>
            <person name="Grotewold E."/>
            <person name="Russinova E."/>
        </authorList>
    </citation>
    <scope>FUNCTION</scope>
    <scope>DISRUPTION PHENOTYPE</scope>
</reference>